<gene>
    <name evidence="1" type="primary">atpE</name>
    <name type="ordered locus">PA14_73300</name>
</gene>
<organism>
    <name type="scientific">Pseudomonas aeruginosa (strain UCBPP-PA14)</name>
    <dbReference type="NCBI Taxonomy" id="208963"/>
    <lineage>
        <taxon>Bacteria</taxon>
        <taxon>Pseudomonadati</taxon>
        <taxon>Pseudomonadota</taxon>
        <taxon>Gammaproteobacteria</taxon>
        <taxon>Pseudomonadales</taxon>
        <taxon>Pseudomonadaceae</taxon>
        <taxon>Pseudomonas</taxon>
    </lineage>
</organism>
<keyword id="KW-0066">ATP synthesis</keyword>
<keyword id="KW-0997">Cell inner membrane</keyword>
<keyword id="KW-1003">Cell membrane</keyword>
<keyword id="KW-0138">CF(0)</keyword>
<keyword id="KW-0375">Hydrogen ion transport</keyword>
<keyword id="KW-0406">Ion transport</keyword>
<keyword id="KW-0446">Lipid-binding</keyword>
<keyword id="KW-0472">Membrane</keyword>
<keyword id="KW-0812">Transmembrane</keyword>
<keyword id="KW-1133">Transmembrane helix</keyword>
<keyword id="KW-0813">Transport</keyword>
<comment type="function">
    <text evidence="1">F(1)F(0) ATP synthase produces ATP from ADP in the presence of a proton or sodium gradient. F-type ATPases consist of two structural domains, F(1) containing the extramembraneous catalytic core and F(0) containing the membrane proton channel, linked together by a central stalk and a peripheral stalk. During catalysis, ATP synthesis in the catalytic domain of F(1) is coupled via a rotary mechanism of the central stalk subunits to proton translocation.</text>
</comment>
<comment type="function">
    <text evidence="1">Key component of the F(0) channel; it plays a direct role in translocation across the membrane. A homomeric c-ring of between 10-14 subunits forms the central stalk rotor element with the F(1) delta and epsilon subunits.</text>
</comment>
<comment type="subunit">
    <text evidence="1">F-type ATPases have 2 components, F(1) - the catalytic core - and F(0) - the membrane proton channel. F(1) has five subunits: alpha(3), beta(3), gamma(1), delta(1), epsilon(1). F(0) has three main subunits: a(1), b(2) and c(10-14). The alpha and beta chains form an alternating ring which encloses part of the gamma chain. F(1) is attached to F(0) by a central stalk formed by the gamma and epsilon chains, while a peripheral stalk is formed by the delta and b chains.</text>
</comment>
<comment type="subcellular location">
    <subcellularLocation>
        <location evidence="1">Cell inner membrane</location>
        <topology evidence="1">Multi-pass membrane protein</topology>
    </subcellularLocation>
</comment>
<comment type="similarity">
    <text evidence="1">Belongs to the ATPase C chain family.</text>
</comment>
<protein>
    <recommendedName>
        <fullName evidence="1">ATP synthase subunit c</fullName>
    </recommendedName>
    <alternativeName>
        <fullName evidence="1">ATP synthase F(0) sector subunit c</fullName>
    </alternativeName>
    <alternativeName>
        <fullName evidence="1">F-type ATPase subunit c</fullName>
        <shortName evidence="1">F-ATPase subunit c</shortName>
    </alternativeName>
    <alternativeName>
        <fullName evidence="1">Lipid-binding protein</fullName>
    </alternativeName>
</protein>
<sequence>METVVGLTAIAVALLIGLGALGTAIGFGLLGGKFLEGAARQPEMVPMLQVKMFIVAGLLDAVTMIGVGIALFFTFANPFVGQIAG</sequence>
<evidence type="ECO:0000255" key="1">
    <source>
        <dbReference type="HAMAP-Rule" id="MF_01396"/>
    </source>
</evidence>
<proteinExistence type="inferred from homology"/>
<feature type="chain" id="PRO_1000184438" description="ATP synthase subunit c">
    <location>
        <begin position="1"/>
        <end position="85"/>
    </location>
</feature>
<feature type="transmembrane region" description="Helical" evidence="1">
    <location>
        <begin position="10"/>
        <end position="30"/>
    </location>
</feature>
<feature type="transmembrane region" description="Helical" evidence="1">
    <location>
        <begin position="53"/>
        <end position="73"/>
    </location>
</feature>
<feature type="site" description="Reversibly protonated during proton transport" evidence="1">
    <location>
        <position position="60"/>
    </location>
</feature>
<accession>Q02DE9</accession>
<reference key="1">
    <citation type="journal article" date="2006" name="Genome Biol.">
        <title>Genomic analysis reveals that Pseudomonas aeruginosa virulence is combinatorial.</title>
        <authorList>
            <person name="Lee D.G."/>
            <person name="Urbach J.M."/>
            <person name="Wu G."/>
            <person name="Liberati N.T."/>
            <person name="Feinbaum R.L."/>
            <person name="Miyata S."/>
            <person name="Diggins L.T."/>
            <person name="He J."/>
            <person name="Saucier M."/>
            <person name="Deziel E."/>
            <person name="Friedman L."/>
            <person name="Li L."/>
            <person name="Grills G."/>
            <person name="Montgomery K."/>
            <person name="Kucherlapati R."/>
            <person name="Rahme L.G."/>
            <person name="Ausubel F.M."/>
        </authorList>
    </citation>
    <scope>NUCLEOTIDE SEQUENCE [LARGE SCALE GENOMIC DNA]</scope>
    <source>
        <strain>UCBPP-PA14</strain>
    </source>
</reference>
<name>ATPL_PSEAB</name>
<dbReference type="EMBL" id="CP000438">
    <property type="protein sequence ID" value="ABJ14946.1"/>
    <property type="molecule type" value="Genomic_DNA"/>
</dbReference>
<dbReference type="RefSeq" id="WP_003097235.1">
    <property type="nucleotide sequence ID" value="NZ_CP034244.1"/>
</dbReference>
<dbReference type="SMR" id="Q02DE9"/>
<dbReference type="GeneID" id="98280758"/>
<dbReference type="KEGG" id="pau:PA14_73300"/>
<dbReference type="PseudoCAP" id="PA14_73300"/>
<dbReference type="HOGENOM" id="CLU_148047_1_0_6"/>
<dbReference type="BioCyc" id="PAER208963:G1G74-6166-MONOMER"/>
<dbReference type="Proteomes" id="UP000000653">
    <property type="component" value="Chromosome"/>
</dbReference>
<dbReference type="GO" id="GO:0005886">
    <property type="term" value="C:plasma membrane"/>
    <property type="evidence" value="ECO:0007669"/>
    <property type="project" value="UniProtKB-SubCell"/>
</dbReference>
<dbReference type="GO" id="GO:0045259">
    <property type="term" value="C:proton-transporting ATP synthase complex"/>
    <property type="evidence" value="ECO:0007669"/>
    <property type="project" value="UniProtKB-KW"/>
</dbReference>
<dbReference type="GO" id="GO:0033177">
    <property type="term" value="C:proton-transporting two-sector ATPase complex, proton-transporting domain"/>
    <property type="evidence" value="ECO:0007669"/>
    <property type="project" value="InterPro"/>
</dbReference>
<dbReference type="GO" id="GO:0008289">
    <property type="term" value="F:lipid binding"/>
    <property type="evidence" value="ECO:0007669"/>
    <property type="project" value="UniProtKB-KW"/>
</dbReference>
<dbReference type="GO" id="GO:0046933">
    <property type="term" value="F:proton-transporting ATP synthase activity, rotational mechanism"/>
    <property type="evidence" value="ECO:0007669"/>
    <property type="project" value="UniProtKB-UniRule"/>
</dbReference>
<dbReference type="CDD" id="cd18185">
    <property type="entry name" value="ATP-synt_Fo_c_ATPE"/>
    <property type="match status" value="1"/>
</dbReference>
<dbReference type="FunFam" id="1.20.20.10:FF:000002">
    <property type="entry name" value="ATP synthase subunit c"/>
    <property type="match status" value="1"/>
</dbReference>
<dbReference type="Gene3D" id="1.20.20.10">
    <property type="entry name" value="F1F0 ATP synthase subunit C"/>
    <property type="match status" value="1"/>
</dbReference>
<dbReference type="HAMAP" id="MF_01396">
    <property type="entry name" value="ATP_synth_c_bact"/>
    <property type="match status" value="1"/>
</dbReference>
<dbReference type="InterPro" id="IPR005953">
    <property type="entry name" value="ATP_synth_csu_bac/chlpt"/>
</dbReference>
<dbReference type="InterPro" id="IPR000454">
    <property type="entry name" value="ATP_synth_F0_csu"/>
</dbReference>
<dbReference type="InterPro" id="IPR020537">
    <property type="entry name" value="ATP_synth_F0_csu_DDCD_BS"/>
</dbReference>
<dbReference type="InterPro" id="IPR038662">
    <property type="entry name" value="ATP_synth_F0_csu_sf"/>
</dbReference>
<dbReference type="InterPro" id="IPR002379">
    <property type="entry name" value="ATPase_proteolipid_c-like_dom"/>
</dbReference>
<dbReference type="InterPro" id="IPR035921">
    <property type="entry name" value="F/V-ATP_Csub_sf"/>
</dbReference>
<dbReference type="NCBIfam" id="TIGR01260">
    <property type="entry name" value="ATP_synt_c"/>
    <property type="match status" value="1"/>
</dbReference>
<dbReference type="NCBIfam" id="NF005363">
    <property type="entry name" value="PRK06876.1"/>
    <property type="match status" value="1"/>
</dbReference>
<dbReference type="Pfam" id="PF00137">
    <property type="entry name" value="ATP-synt_C"/>
    <property type="match status" value="1"/>
</dbReference>
<dbReference type="PRINTS" id="PR00124">
    <property type="entry name" value="ATPASEC"/>
</dbReference>
<dbReference type="SUPFAM" id="SSF81333">
    <property type="entry name" value="F1F0 ATP synthase subunit C"/>
    <property type="match status" value="1"/>
</dbReference>
<dbReference type="PROSITE" id="PS00605">
    <property type="entry name" value="ATPASE_C"/>
    <property type="match status" value="1"/>
</dbReference>